<accession>B4T0G6</accession>
<sequence length="106" mass="12152">MGKTNDWLDFDQLVEDSVRDALKPPSMYKVILVNDDYTPMEFVIDVLQKFFSYDVERATQLMLAVHYQGKAICGVFTAEVAETKVAMVNKYARENEHPLLCTLEKA</sequence>
<feature type="chain" id="PRO_1000115474" description="ATP-dependent Clp protease adapter protein ClpS">
    <location>
        <begin position="1"/>
        <end position="106"/>
    </location>
</feature>
<comment type="function">
    <text evidence="1">Involved in the modulation of the specificity of the ClpAP-mediated ATP-dependent protein degradation.</text>
</comment>
<comment type="subunit">
    <text evidence="1">Binds to the N-terminal domain of the chaperone ClpA.</text>
</comment>
<comment type="similarity">
    <text evidence="1">Belongs to the ClpS family.</text>
</comment>
<evidence type="ECO:0000255" key="1">
    <source>
        <dbReference type="HAMAP-Rule" id="MF_00302"/>
    </source>
</evidence>
<protein>
    <recommendedName>
        <fullName evidence="1">ATP-dependent Clp protease adapter protein ClpS</fullName>
    </recommendedName>
</protein>
<dbReference type="EMBL" id="CP001113">
    <property type="protein sequence ID" value="ACF63676.1"/>
    <property type="molecule type" value="Genomic_DNA"/>
</dbReference>
<dbReference type="RefSeq" id="WP_000520789.1">
    <property type="nucleotide sequence ID" value="NZ_CCMR01000003.1"/>
</dbReference>
<dbReference type="SMR" id="B4T0G6"/>
<dbReference type="KEGG" id="see:SNSL254_A0979"/>
<dbReference type="HOGENOM" id="CLU_134358_2_1_6"/>
<dbReference type="Proteomes" id="UP000008824">
    <property type="component" value="Chromosome"/>
</dbReference>
<dbReference type="GO" id="GO:0030163">
    <property type="term" value="P:protein catabolic process"/>
    <property type="evidence" value="ECO:0007669"/>
    <property type="project" value="InterPro"/>
</dbReference>
<dbReference type="GO" id="GO:0006508">
    <property type="term" value="P:proteolysis"/>
    <property type="evidence" value="ECO:0007669"/>
    <property type="project" value="UniProtKB-UniRule"/>
</dbReference>
<dbReference type="FunFam" id="3.30.1390.10:FF:000002">
    <property type="entry name" value="ATP-dependent Clp protease adapter protein ClpS"/>
    <property type="match status" value="1"/>
</dbReference>
<dbReference type="Gene3D" id="3.30.1390.10">
    <property type="match status" value="1"/>
</dbReference>
<dbReference type="HAMAP" id="MF_00302">
    <property type="entry name" value="ClpS"/>
    <property type="match status" value="1"/>
</dbReference>
<dbReference type="InterPro" id="IPR022935">
    <property type="entry name" value="ClpS"/>
</dbReference>
<dbReference type="InterPro" id="IPR003769">
    <property type="entry name" value="ClpS_core"/>
</dbReference>
<dbReference type="InterPro" id="IPR014719">
    <property type="entry name" value="Ribosomal_bL12_C/ClpS-like"/>
</dbReference>
<dbReference type="NCBIfam" id="NF000670">
    <property type="entry name" value="PRK00033.1-3"/>
    <property type="match status" value="1"/>
</dbReference>
<dbReference type="NCBIfam" id="NF000672">
    <property type="entry name" value="PRK00033.1-5"/>
    <property type="match status" value="1"/>
</dbReference>
<dbReference type="PANTHER" id="PTHR33473:SF19">
    <property type="entry name" value="ATP-DEPENDENT CLP PROTEASE ADAPTER PROTEIN CLPS"/>
    <property type="match status" value="1"/>
</dbReference>
<dbReference type="PANTHER" id="PTHR33473">
    <property type="entry name" value="ATP-DEPENDENT CLP PROTEASE ADAPTER PROTEIN CLPS1, CHLOROPLASTIC"/>
    <property type="match status" value="1"/>
</dbReference>
<dbReference type="Pfam" id="PF02617">
    <property type="entry name" value="ClpS"/>
    <property type="match status" value="1"/>
</dbReference>
<dbReference type="SUPFAM" id="SSF54736">
    <property type="entry name" value="ClpS-like"/>
    <property type="match status" value="1"/>
</dbReference>
<name>CLPS_SALNS</name>
<proteinExistence type="inferred from homology"/>
<reference key="1">
    <citation type="journal article" date="2011" name="J. Bacteriol.">
        <title>Comparative genomics of 28 Salmonella enterica isolates: evidence for CRISPR-mediated adaptive sublineage evolution.</title>
        <authorList>
            <person name="Fricke W.F."/>
            <person name="Mammel M.K."/>
            <person name="McDermott P.F."/>
            <person name="Tartera C."/>
            <person name="White D.G."/>
            <person name="Leclerc J.E."/>
            <person name="Ravel J."/>
            <person name="Cebula T.A."/>
        </authorList>
    </citation>
    <scope>NUCLEOTIDE SEQUENCE [LARGE SCALE GENOMIC DNA]</scope>
    <source>
        <strain>SL254</strain>
    </source>
</reference>
<organism>
    <name type="scientific">Salmonella newport (strain SL254)</name>
    <dbReference type="NCBI Taxonomy" id="423368"/>
    <lineage>
        <taxon>Bacteria</taxon>
        <taxon>Pseudomonadati</taxon>
        <taxon>Pseudomonadota</taxon>
        <taxon>Gammaproteobacteria</taxon>
        <taxon>Enterobacterales</taxon>
        <taxon>Enterobacteriaceae</taxon>
        <taxon>Salmonella</taxon>
    </lineage>
</organism>
<gene>
    <name evidence="1" type="primary">clpS</name>
    <name type="ordered locus">SNSL254_A0979</name>
</gene>